<evidence type="ECO:0000255" key="1">
    <source>
        <dbReference type="HAMAP-Rule" id="MF_00379"/>
    </source>
</evidence>
<protein>
    <recommendedName>
        <fullName evidence="1">tRNA modification GTPase MnmE</fullName>
        <ecNumber evidence="1">3.6.-.-</ecNumber>
    </recommendedName>
</protein>
<name>MNME_BACAH</name>
<comment type="function">
    <text evidence="1">Exhibits a very high intrinsic GTPase hydrolysis rate. Involved in the addition of a carboxymethylaminomethyl (cmnm) group at the wobble position (U34) of certain tRNAs, forming tRNA-cmnm(5)s(2)U34.</text>
</comment>
<comment type="cofactor">
    <cofactor evidence="1">
        <name>K(+)</name>
        <dbReference type="ChEBI" id="CHEBI:29103"/>
    </cofactor>
    <text evidence="1">Binds 1 potassium ion per subunit.</text>
</comment>
<comment type="subunit">
    <text evidence="1">Homodimer. Heterotetramer of two MnmE and two MnmG subunits.</text>
</comment>
<comment type="subcellular location">
    <subcellularLocation>
        <location evidence="1">Cytoplasm</location>
    </subcellularLocation>
</comment>
<comment type="similarity">
    <text evidence="1">Belongs to the TRAFAC class TrmE-Era-EngA-EngB-Septin-like GTPase superfamily. TrmE GTPase family.</text>
</comment>
<proteinExistence type="inferred from homology"/>
<accession>A0RLR2</accession>
<sequence length="458" mass="50561">MEFDTIAAISTALGEGAIAIVRVSGDDAVEKVNRIFKGKDLTEVPSHTIHYGHIVDLDTNQVIEEVMVSIMRAPRTFTRENIVEINCHGGLVSVNKVLQLILAQGVRLAEPGEFTKRAFLNGRIDLSQAEAVMDLIRAKTDRAMNVAINQMEGRLSKLIGRLRQDILETLAHVEVNIDYPEYDDVEEMTHNILIEKATHVRSEIAKILETSKQGKILREGIATAIIGRPNVGKSSLLNSLVQEKKAIVTDIAGTTRDVIEEYVNVRGVPLKLIDTAGIRETEDVVERIGVERSKEMMSQADLVLVVVNYSEALTNEDEELFRAVQGKDFIVIVNKTDLPQAIDMERVIELAAGNRVITTSLIEEQGIDELEKAIADLFFEGTIDSADVTYVSNARHIGLLTQAGKTIGDAIEAIENGVPIDMVQIDLTRTWEILGEITGDTVHESLIDQLFSQFCLGK</sequence>
<gene>
    <name evidence="1" type="primary">mnmE</name>
    <name evidence="1" type="synonym">trmE</name>
    <name type="ordered locus">BALH_4991</name>
</gene>
<dbReference type="EC" id="3.6.-.-" evidence="1"/>
<dbReference type="EMBL" id="CP000485">
    <property type="protein sequence ID" value="ABK88155.1"/>
    <property type="molecule type" value="Genomic_DNA"/>
</dbReference>
<dbReference type="RefSeq" id="WP_000393778.1">
    <property type="nucleotide sequence ID" value="NC_008600.1"/>
</dbReference>
<dbReference type="SMR" id="A0RLR2"/>
<dbReference type="KEGG" id="btl:BALH_4991"/>
<dbReference type="HOGENOM" id="CLU_019624_4_1_9"/>
<dbReference type="GO" id="GO:0005829">
    <property type="term" value="C:cytosol"/>
    <property type="evidence" value="ECO:0007669"/>
    <property type="project" value="TreeGrafter"/>
</dbReference>
<dbReference type="GO" id="GO:0005525">
    <property type="term" value="F:GTP binding"/>
    <property type="evidence" value="ECO:0007669"/>
    <property type="project" value="UniProtKB-UniRule"/>
</dbReference>
<dbReference type="GO" id="GO:0003924">
    <property type="term" value="F:GTPase activity"/>
    <property type="evidence" value="ECO:0007669"/>
    <property type="project" value="UniProtKB-UniRule"/>
</dbReference>
<dbReference type="GO" id="GO:0046872">
    <property type="term" value="F:metal ion binding"/>
    <property type="evidence" value="ECO:0007669"/>
    <property type="project" value="UniProtKB-KW"/>
</dbReference>
<dbReference type="GO" id="GO:0030488">
    <property type="term" value="P:tRNA methylation"/>
    <property type="evidence" value="ECO:0007669"/>
    <property type="project" value="TreeGrafter"/>
</dbReference>
<dbReference type="GO" id="GO:0002098">
    <property type="term" value="P:tRNA wobble uridine modification"/>
    <property type="evidence" value="ECO:0007669"/>
    <property type="project" value="TreeGrafter"/>
</dbReference>
<dbReference type="CDD" id="cd04164">
    <property type="entry name" value="trmE"/>
    <property type="match status" value="1"/>
</dbReference>
<dbReference type="CDD" id="cd14858">
    <property type="entry name" value="TrmE_N"/>
    <property type="match status" value="1"/>
</dbReference>
<dbReference type="FunFam" id="3.30.1360.120:FF:000003">
    <property type="entry name" value="tRNA modification GTPase MnmE"/>
    <property type="match status" value="1"/>
</dbReference>
<dbReference type="FunFam" id="3.40.50.300:FF:000494">
    <property type="entry name" value="tRNA modification GTPase MnmE"/>
    <property type="match status" value="1"/>
</dbReference>
<dbReference type="Gene3D" id="3.40.50.300">
    <property type="entry name" value="P-loop containing nucleotide triphosphate hydrolases"/>
    <property type="match status" value="1"/>
</dbReference>
<dbReference type="Gene3D" id="3.30.1360.120">
    <property type="entry name" value="Probable tRNA modification gtpase trme, domain 1"/>
    <property type="match status" value="1"/>
</dbReference>
<dbReference type="Gene3D" id="1.20.120.430">
    <property type="entry name" value="tRNA modification GTPase MnmE domain 2"/>
    <property type="match status" value="1"/>
</dbReference>
<dbReference type="HAMAP" id="MF_00379">
    <property type="entry name" value="GTPase_MnmE"/>
    <property type="match status" value="1"/>
</dbReference>
<dbReference type="InterPro" id="IPR031168">
    <property type="entry name" value="G_TrmE"/>
</dbReference>
<dbReference type="InterPro" id="IPR006073">
    <property type="entry name" value="GTP-bd"/>
</dbReference>
<dbReference type="InterPro" id="IPR018948">
    <property type="entry name" value="GTP-bd_TrmE_N"/>
</dbReference>
<dbReference type="InterPro" id="IPR004520">
    <property type="entry name" value="GTPase_MnmE"/>
</dbReference>
<dbReference type="InterPro" id="IPR027368">
    <property type="entry name" value="MnmE_dom2"/>
</dbReference>
<dbReference type="InterPro" id="IPR025867">
    <property type="entry name" value="MnmE_helical"/>
</dbReference>
<dbReference type="InterPro" id="IPR027417">
    <property type="entry name" value="P-loop_NTPase"/>
</dbReference>
<dbReference type="InterPro" id="IPR005225">
    <property type="entry name" value="Small_GTP-bd"/>
</dbReference>
<dbReference type="InterPro" id="IPR027266">
    <property type="entry name" value="TrmE/GcvT_dom1"/>
</dbReference>
<dbReference type="NCBIfam" id="TIGR00450">
    <property type="entry name" value="mnmE_trmE_thdF"/>
    <property type="match status" value="1"/>
</dbReference>
<dbReference type="NCBIfam" id="NF003661">
    <property type="entry name" value="PRK05291.1-3"/>
    <property type="match status" value="1"/>
</dbReference>
<dbReference type="NCBIfam" id="TIGR00231">
    <property type="entry name" value="small_GTP"/>
    <property type="match status" value="1"/>
</dbReference>
<dbReference type="PANTHER" id="PTHR42714">
    <property type="entry name" value="TRNA MODIFICATION GTPASE GTPBP3"/>
    <property type="match status" value="1"/>
</dbReference>
<dbReference type="PANTHER" id="PTHR42714:SF2">
    <property type="entry name" value="TRNA MODIFICATION GTPASE GTPBP3, MITOCHONDRIAL"/>
    <property type="match status" value="1"/>
</dbReference>
<dbReference type="Pfam" id="PF01926">
    <property type="entry name" value="MMR_HSR1"/>
    <property type="match status" value="1"/>
</dbReference>
<dbReference type="Pfam" id="PF12631">
    <property type="entry name" value="MnmE_helical"/>
    <property type="match status" value="1"/>
</dbReference>
<dbReference type="Pfam" id="PF10396">
    <property type="entry name" value="TrmE_N"/>
    <property type="match status" value="1"/>
</dbReference>
<dbReference type="SUPFAM" id="SSF52540">
    <property type="entry name" value="P-loop containing nucleoside triphosphate hydrolases"/>
    <property type="match status" value="1"/>
</dbReference>
<dbReference type="SUPFAM" id="SSF116878">
    <property type="entry name" value="TrmE connector domain"/>
    <property type="match status" value="1"/>
</dbReference>
<dbReference type="PROSITE" id="PS51709">
    <property type="entry name" value="G_TRME"/>
    <property type="match status" value="1"/>
</dbReference>
<keyword id="KW-0963">Cytoplasm</keyword>
<keyword id="KW-0342">GTP-binding</keyword>
<keyword id="KW-0378">Hydrolase</keyword>
<keyword id="KW-0460">Magnesium</keyword>
<keyword id="KW-0479">Metal-binding</keyword>
<keyword id="KW-0547">Nucleotide-binding</keyword>
<keyword id="KW-0630">Potassium</keyword>
<keyword id="KW-0819">tRNA processing</keyword>
<reference key="1">
    <citation type="journal article" date="2007" name="J. Bacteriol.">
        <title>The complete genome sequence of Bacillus thuringiensis Al Hakam.</title>
        <authorList>
            <person name="Challacombe J.F."/>
            <person name="Altherr M.R."/>
            <person name="Xie G."/>
            <person name="Bhotika S.S."/>
            <person name="Brown N."/>
            <person name="Bruce D."/>
            <person name="Campbell C.S."/>
            <person name="Campbell M.L."/>
            <person name="Chen J."/>
            <person name="Chertkov O."/>
            <person name="Cleland C."/>
            <person name="Dimitrijevic M."/>
            <person name="Doggett N.A."/>
            <person name="Fawcett J.J."/>
            <person name="Glavina T."/>
            <person name="Goodwin L.A."/>
            <person name="Green L.D."/>
            <person name="Han C.S."/>
            <person name="Hill K.K."/>
            <person name="Hitchcock P."/>
            <person name="Jackson P.J."/>
            <person name="Keim P."/>
            <person name="Kewalramani A.R."/>
            <person name="Longmire J."/>
            <person name="Lucas S."/>
            <person name="Malfatti S."/>
            <person name="Martinez D."/>
            <person name="McMurry K."/>
            <person name="Meincke L.J."/>
            <person name="Misra M."/>
            <person name="Moseman B.L."/>
            <person name="Mundt M."/>
            <person name="Munk A.C."/>
            <person name="Okinaka R.T."/>
            <person name="Parson-Quintana B."/>
            <person name="Reilly L.P."/>
            <person name="Richardson P."/>
            <person name="Robinson D.L."/>
            <person name="Saunders E."/>
            <person name="Tapia R."/>
            <person name="Tesmer J.G."/>
            <person name="Thayer N."/>
            <person name="Thompson L.S."/>
            <person name="Tice H."/>
            <person name="Ticknor L.O."/>
            <person name="Wills P.L."/>
            <person name="Gilna P."/>
            <person name="Brettin T.S."/>
        </authorList>
    </citation>
    <scope>NUCLEOTIDE SEQUENCE [LARGE SCALE GENOMIC DNA]</scope>
    <source>
        <strain>Al Hakam</strain>
    </source>
</reference>
<organism>
    <name type="scientific">Bacillus thuringiensis (strain Al Hakam)</name>
    <dbReference type="NCBI Taxonomy" id="412694"/>
    <lineage>
        <taxon>Bacteria</taxon>
        <taxon>Bacillati</taxon>
        <taxon>Bacillota</taxon>
        <taxon>Bacilli</taxon>
        <taxon>Bacillales</taxon>
        <taxon>Bacillaceae</taxon>
        <taxon>Bacillus</taxon>
        <taxon>Bacillus cereus group</taxon>
    </lineage>
</organism>
<feature type="chain" id="PRO_1000048797" description="tRNA modification GTPase MnmE">
    <location>
        <begin position="1"/>
        <end position="458"/>
    </location>
</feature>
<feature type="domain" description="TrmE-type G">
    <location>
        <begin position="220"/>
        <end position="379"/>
    </location>
</feature>
<feature type="binding site" evidence="1">
    <location>
        <position position="22"/>
    </location>
    <ligand>
        <name>(6S)-5-formyl-5,6,7,8-tetrahydrofolate</name>
        <dbReference type="ChEBI" id="CHEBI:57457"/>
    </ligand>
</feature>
<feature type="binding site" evidence="1">
    <location>
        <position position="84"/>
    </location>
    <ligand>
        <name>(6S)-5-formyl-5,6,7,8-tetrahydrofolate</name>
        <dbReference type="ChEBI" id="CHEBI:57457"/>
    </ligand>
</feature>
<feature type="binding site" evidence="1">
    <location>
        <position position="123"/>
    </location>
    <ligand>
        <name>(6S)-5-formyl-5,6,7,8-tetrahydrofolate</name>
        <dbReference type="ChEBI" id="CHEBI:57457"/>
    </ligand>
</feature>
<feature type="binding site" evidence="1">
    <location>
        <begin position="230"/>
        <end position="235"/>
    </location>
    <ligand>
        <name>GTP</name>
        <dbReference type="ChEBI" id="CHEBI:37565"/>
    </ligand>
</feature>
<feature type="binding site" evidence="1">
    <location>
        <position position="230"/>
    </location>
    <ligand>
        <name>K(+)</name>
        <dbReference type="ChEBI" id="CHEBI:29103"/>
    </ligand>
</feature>
<feature type="binding site" evidence="1">
    <location>
        <position position="234"/>
    </location>
    <ligand>
        <name>Mg(2+)</name>
        <dbReference type="ChEBI" id="CHEBI:18420"/>
    </ligand>
</feature>
<feature type="binding site" evidence="1">
    <location>
        <begin position="249"/>
        <end position="255"/>
    </location>
    <ligand>
        <name>GTP</name>
        <dbReference type="ChEBI" id="CHEBI:37565"/>
    </ligand>
</feature>
<feature type="binding site" evidence="1">
    <location>
        <position position="249"/>
    </location>
    <ligand>
        <name>K(+)</name>
        <dbReference type="ChEBI" id="CHEBI:29103"/>
    </ligand>
</feature>
<feature type="binding site" evidence="1">
    <location>
        <position position="251"/>
    </location>
    <ligand>
        <name>K(+)</name>
        <dbReference type="ChEBI" id="CHEBI:29103"/>
    </ligand>
</feature>
<feature type="binding site" evidence="1">
    <location>
        <position position="254"/>
    </location>
    <ligand>
        <name>K(+)</name>
        <dbReference type="ChEBI" id="CHEBI:29103"/>
    </ligand>
</feature>
<feature type="binding site" evidence="1">
    <location>
        <position position="255"/>
    </location>
    <ligand>
        <name>Mg(2+)</name>
        <dbReference type="ChEBI" id="CHEBI:18420"/>
    </ligand>
</feature>
<feature type="binding site" evidence="1">
    <location>
        <begin position="274"/>
        <end position="277"/>
    </location>
    <ligand>
        <name>GTP</name>
        <dbReference type="ChEBI" id="CHEBI:37565"/>
    </ligand>
</feature>
<feature type="binding site" evidence="1">
    <location>
        <position position="458"/>
    </location>
    <ligand>
        <name>(6S)-5-formyl-5,6,7,8-tetrahydrofolate</name>
        <dbReference type="ChEBI" id="CHEBI:57457"/>
    </ligand>
</feature>